<gene>
    <name evidence="2" type="primary">rplL</name>
    <name type="ordered locus">STY3733</name>
    <name type="ordered locus">t3475</name>
</gene>
<feature type="initiator methionine" description="Removed" evidence="1">
    <location>
        <position position="1"/>
    </location>
</feature>
<feature type="chain" id="PRO_0000157571" description="Large ribosomal subunit protein bL12">
    <location>
        <begin position="2"/>
        <end position="121"/>
    </location>
</feature>
<feature type="modified residue" description="N-acetylserine; in form L7" evidence="1">
    <location>
        <position position="2"/>
    </location>
</feature>
<protein>
    <recommendedName>
        <fullName evidence="2">Large ribosomal subunit protein bL12</fullName>
    </recommendedName>
    <alternativeName>
        <fullName evidence="3">50S ribosomal protein L7/L12</fullName>
    </alternativeName>
    <alternativeName>
        <fullName>L8</fullName>
    </alternativeName>
</protein>
<proteinExistence type="inferred from homology"/>
<accession>P0A2A0</accession>
<accession>P18081</accession>
<dbReference type="EMBL" id="AL513382">
    <property type="protein sequence ID" value="CAD09488.1"/>
    <property type="molecule type" value="Genomic_DNA"/>
</dbReference>
<dbReference type="EMBL" id="AE014613">
    <property type="protein sequence ID" value="AAO70991.1"/>
    <property type="molecule type" value="Genomic_DNA"/>
</dbReference>
<dbReference type="RefSeq" id="NP_457918.1">
    <property type="nucleotide sequence ID" value="NC_003198.1"/>
</dbReference>
<dbReference type="RefSeq" id="WP_000028882.1">
    <property type="nucleotide sequence ID" value="NZ_WSUR01000043.1"/>
</dbReference>
<dbReference type="SMR" id="P0A2A0"/>
<dbReference type="STRING" id="220341.gene:17587589"/>
<dbReference type="GeneID" id="89551069"/>
<dbReference type="KEGG" id="stt:t3475"/>
<dbReference type="KEGG" id="sty:STY3733"/>
<dbReference type="PATRIC" id="fig|220341.7.peg.3806"/>
<dbReference type="eggNOG" id="COG0222">
    <property type="taxonomic scope" value="Bacteria"/>
</dbReference>
<dbReference type="HOGENOM" id="CLU_086499_3_2_6"/>
<dbReference type="OMA" id="LEDKWGV"/>
<dbReference type="OrthoDB" id="9811748at2"/>
<dbReference type="Proteomes" id="UP000000541">
    <property type="component" value="Chromosome"/>
</dbReference>
<dbReference type="Proteomes" id="UP000002670">
    <property type="component" value="Chromosome"/>
</dbReference>
<dbReference type="GO" id="GO:0022625">
    <property type="term" value="C:cytosolic large ribosomal subunit"/>
    <property type="evidence" value="ECO:0007669"/>
    <property type="project" value="TreeGrafter"/>
</dbReference>
<dbReference type="GO" id="GO:0003729">
    <property type="term" value="F:mRNA binding"/>
    <property type="evidence" value="ECO:0007669"/>
    <property type="project" value="TreeGrafter"/>
</dbReference>
<dbReference type="GO" id="GO:0003735">
    <property type="term" value="F:structural constituent of ribosome"/>
    <property type="evidence" value="ECO:0007669"/>
    <property type="project" value="InterPro"/>
</dbReference>
<dbReference type="GO" id="GO:0006412">
    <property type="term" value="P:translation"/>
    <property type="evidence" value="ECO:0007669"/>
    <property type="project" value="UniProtKB-UniRule"/>
</dbReference>
<dbReference type="CDD" id="cd00387">
    <property type="entry name" value="Ribosomal_L7_L12"/>
    <property type="match status" value="1"/>
</dbReference>
<dbReference type="FunFam" id="1.20.5.710:FF:000001">
    <property type="entry name" value="50S ribosomal protein L7/L12"/>
    <property type="match status" value="1"/>
</dbReference>
<dbReference type="FunFam" id="3.30.1390.10:FF:000001">
    <property type="entry name" value="50S ribosomal protein L7/L12"/>
    <property type="match status" value="1"/>
</dbReference>
<dbReference type="Gene3D" id="3.30.1390.10">
    <property type="match status" value="1"/>
</dbReference>
<dbReference type="Gene3D" id="1.20.5.710">
    <property type="entry name" value="Single helix bin"/>
    <property type="match status" value="1"/>
</dbReference>
<dbReference type="HAMAP" id="MF_00368">
    <property type="entry name" value="Ribosomal_bL12"/>
    <property type="match status" value="1"/>
</dbReference>
<dbReference type="InterPro" id="IPR000206">
    <property type="entry name" value="Ribosomal_bL12"/>
</dbReference>
<dbReference type="InterPro" id="IPR013823">
    <property type="entry name" value="Ribosomal_bL12_C"/>
</dbReference>
<dbReference type="InterPro" id="IPR014719">
    <property type="entry name" value="Ribosomal_bL12_C/ClpS-like"/>
</dbReference>
<dbReference type="InterPro" id="IPR008932">
    <property type="entry name" value="Ribosomal_bL12_oligo"/>
</dbReference>
<dbReference type="InterPro" id="IPR036235">
    <property type="entry name" value="Ribosomal_bL12_oligo_N_sf"/>
</dbReference>
<dbReference type="NCBIfam" id="TIGR00855">
    <property type="entry name" value="L12"/>
    <property type="match status" value="1"/>
</dbReference>
<dbReference type="PANTHER" id="PTHR45987">
    <property type="entry name" value="39S RIBOSOMAL PROTEIN L12"/>
    <property type="match status" value="1"/>
</dbReference>
<dbReference type="PANTHER" id="PTHR45987:SF4">
    <property type="entry name" value="LARGE RIBOSOMAL SUBUNIT PROTEIN BL12M"/>
    <property type="match status" value="1"/>
</dbReference>
<dbReference type="Pfam" id="PF00542">
    <property type="entry name" value="Ribosomal_L12"/>
    <property type="match status" value="1"/>
</dbReference>
<dbReference type="Pfam" id="PF16320">
    <property type="entry name" value="Ribosomal_L12_N"/>
    <property type="match status" value="1"/>
</dbReference>
<dbReference type="SUPFAM" id="SSF54736">
    <property type="entry name" value="ClpS-like"/>
    <property type="match status" value="1"/>
</dbReference>
<dbReference type="SUPFAM" id="SSF48300">
    <property type="entry name" value="Ribosomal protein L7/12, oligomerisation (N-terminal) domain"/>
    <property type="match status" value="1"/>
</dbReference>
<comment type="function">
    <text evidence="2">Forms part of the ribosomal stalk which helps the ribosome interact with GTP-bound translation factors. Is thus essential for accurate translation.</text>
</comment>
<comment type="subunit">
    <text evidence="2">Homodimer. Part of the ribosomal stalk of the 50S ribosomal subunit. Forms a multimeric L10(L12)X complex, where L10 forms an elongated spine to which 2 to 4 L12 dimers bind in a sequential fashion. Binds GTP-bound translation factors.</text>
</comment>
<comment type="PTM">
    <text evidence="1">Acetylation of Ser-2 converts L12 to L7.</text>
</comment>
<comment type="similarity">
    <text evidence="2">Belongs to the bacterial ribosomal protein bL12 family.</text>
</comment>
<keyword id="KW-0007">Acetylation</keyword>
<keyword id="KW-0687">Ribonucleoprotein</keyword>
<keyword id="KW-0689">Ribosomal protein</keyword>
<sequence length="121" mass="12299">MSITKDQIIEAVSAMSVMDVVELISAMEEKFGVSAAAAVAVAAGPAEAAEEKTEFDVILKAAGANKVAVIKAVRGATGLGLKEAKDLVESAPAALKEGVSKDDAEALKKSLEEAGAEVEVK</sequence>
<evidence type="ECO:0000250" key="1"/>
<evidence type="ECO:0000255" key="2">
    <source>
        <dbReference type="HAMAP-Rule" id="MF_00368"/>
    </source>
</evidence>
<evidence type="ECO:0000305" key="3"/>
<name>RL7_SALTI</name>
<reference key="1">
    <citation type="journal article" date="2001" name="Nature">
        <title>Complete genome sequence of a multiple drug resistant Salmonella enterica serovar Typhi CT18.</title>
        <authorList>
            <person name="Parkhill J."/>
            <person name="Dougan G."/>
            <person name="James K.D."/>
            <person name="Thomson N.R."/>
            <person name="Pickard D."/>
            <person name="Wain J."/>
            <person name="Churcher C.M."/>
            <person name="Mungall K.L."/>
            <person name="Bentley S.D."/>
            <person name="Holden M.T.G."/>
            <person name="Sebaihia M."/>
            <person name="Baker S."/>
            <person name="Basham D."/>
            <person name="Brooks K."/>
            <person name="Chillingworth T."/>
            <person name="Connerton P."/>
            <person name="Cronin A."/>
            <person name="Davis P."/>
            <person name="Davies R.M."/>
            <person name="Dowd L."/>
            <person name="White N."/>
            <person name="Farrar J."/>
            <person name="Feltwell T."/>
            <person name="Hamlin N."/>
            <person name="Haque A."/>
            <person name="Hien T.T."/>
            <person name="Holroyd S."/>
            <person name="Jagels K."/>
            <person name="Krogh A."/>
            <person name="Larsen T.S."/>
            <person name="Leather S."/>
            <person name="Moule S."/>
            <person name="O'Gaora P."/>
            <person name="Parry C."/>
            <person name="Quail M.A."/>
            <person name="Rutherford K.M."/>
            <person name="Simmonds M."/>
            <person name="Skelton J."/>
            <person name="Stevens K."/>
            <person name="Whitehead S."/>
            <person name="Barrell B.G."/>
        </authorList>
    </citation>
    <scope>NUCLEOTIDE SEQUENCE [LARGE SCALE GENOMIC DNA]</scope>
    <source>
        <strain>CT18</strain>
    </source>
</reference>
<reference key="2">
    <citation type="journal article" date="2003" name="J. Bacteriol.">
        <title>Comparative genomics of Salmonella enterica serovar Typhi strains Ty2 and CT18.</title>
        <authorList>
            <person name="Deng W."/>
            <person name="Liou S.-R."/>
            <person name="Plunkett G. III"/>
            <person name="Mayhew G.F."/>
            <person name="Rose D.J."/>
            <person name="Burland V."/>
            <person name="Kodoyianni V."/>
            <person name="Schwartz D.C."/>
            <person name="Blattner F.R."/>
        </authorList>
    </citation>
    <scope>NUCLEOTIDE SEQUENCE [LARGE SCALE GENOMIC DNA]</scope>
    <source>
        <strain>ATCC 700931 / Ty2</strain>
    </source>
</reference>
<organism>
    <name type="scientific">Salmonella typhi</name>
    <dbReference type="NCBI Taxonomy" id="90370"/>
    <lineage>
        <taxon>Bacteria</taxon>
        <taxon>Pseudomonadati</taxon>
        <taxon>Pseudomonadota</taxon>
        <taxon>Gammaproteobacteria</taxon>
        <taxon>Enterobacterales</taxon>
        <taxon>Enterobacteriaceae</taxon>
        <taxon>Salmonella</taxon>
    </lineage>
</organism>